<proteinExistence type="inferred from homology"/>
<protein>
    <recommendedName>
        <fullName evidence="1">Large ribosomal subunit protein bL34</fullName>
    </recommendedName>
    <alternativeName>
        <fullName>50S ribosomal protein L34</fullName>
    </alternativeName>
</protein>
<dbReference type="EMBL" id="AE007869">
    <property type="protein sequence ID" value="ABW89718.1"/>
    <property type="molecule type" value="Genomic_DNA"/>
</dbReference>
<dbReference type="RefSeq" id="WP_010972613.1">
    <property type="nucleotide sequence ID" value="NC_003062.2"/>
</dbReference>
<dbReference type="RefSeq" id="YP_001542591.1">
    <property type="nucleotide sequence ID" value="NC_003062.2"/>
</dbReference>
<dbReference type="SMR" id="P68996"/>
<dbReference type="STRING" id="176299.Atu8066"/>
<dbReference type="EnsemblBacteria" id="ABW89718">
    <property type="protein sequence ID" value="ABW89718"/>
    <property type="gene ID" value="Atu8066"/>
</dbReference>
<dbReference type="GeneID" id="5729689"/>
<dbReference type="KEGG" id="atu:Atu8066"/>
<dbReference type="PATRIC" id="fig|176299.10.peg.378"/>
<dbReference type="eggNOG" id="COG0230">
    <property type="taxonomic scope" value="Bacteria"/>
</dbReference>
<dbReference type="HOGENOM" id="CLU_129938_2_0_5"/>
<dbReference type="PhylomeDB" id="P68996"/>
<dbReference type="Proteomes" id="UP000000813">
    <property type="component" value="Chromosome circular"/>
</dbReference>
<dbReference type="GO" id="GO:1990904">
    <property type="term" value="C:ribonucleoprotein complex"/>
    <property type="evidence" value="ECO:0007669"/>
    <property type="project" value="UniProtKB-KW"/>
</dbReference>
<dbReference type="GO" id="GO:0005840">
    <property type="term" value="C:ribosome"/>
    <property type="evidence" value="ECO:0007669"/>
    <property type="project" value="UniProtKB-KW"/>
</dbReference>
<dbReference type="GO" id="GO:0003735">
    <property type="term" value="F:structural constituent of ribosome"/>
    <property type="evidence" value="ECO:0007669"/>
    <property type="project" value="InterPro"/>
</dbReference>
<dbReference type="GO" id="GO:0006412">
    <property type="term" value="P:translation"/>
    <property type="evidence" value="ECO:0007669"/>
    <property type="project" value="UniProtKB-UniRule"/>
</dbReference>
<dbReference type="FunFam" id="1.10.287.3980:FF:000001">
    <property type="entry name" value="Mitochondrial ribosomal protein L34"/>
    <property type="match status" value="1"/>
</dbReference>
<dbReference type="Gene3D" id="1.10.287.3980">
    <property type="match status" value="1"/>
</dbReference>
<dbReference type="HAMAP" id="MF_00391">
    <property type="entry name" value="Ribosomal_bL34"/>
    <property type="match status" value="1"/>
</dbReference>
<dbReference type="InterPro" id="IPR000271">
    <property type="entry name" value="Ribosomal_bL34"/>
</dbReference>
<dbReference type="InterPro" id="IPR020939">
    <property type="entry name" value="Ribosomal_bL34_CS"/>
</dbReference>
<dbReference type="NCBIfam" id="TIGR01030">
    <property type="entry name" value="rpmH_bact"/>
    <property type="match status" value="1"/>
</dbReference>
<dbReference type="PANTHER" id="PTHR14503:SF4">
    <property type="entry name" value="LARGE RIBOSOMAL SUBUNIT PROTEIN BL34M"/>
    <property type="match status" value="1"/>
</dbReference>
<dbReference type="PANTHER" id="PTHR14503">
    <property type="entry name" value="MITOCHONDRIAL RIBOSOMAL PROTEIN 34 FAMILY MEMBER"/>
    <property type="match status" value="1"/>
</dbReference>
<dbReference type="Pfam" id="PF00468">
    <property type="entry name" value="Ribosomal_L34"/>
    <property type="match status" value="1"/>
</dbReference>
<dbReference type="PROSITE" id="PS00784">
    <property type="entry name" value="RIBOSOMAL_L34"/>
    <property type="match status" value="1"/>
</dbReference>
<evidence type="ECO:0000305" key="1"/>
<organism>
    <name type="scientific">Agrobacterium fabrum (strain C58 / ATCC 33970)</name>
    <name type="common">Agrobacterium tumefaciens (strain C58)</name>
    <dbReference type="NCBI Taxonomy" id="176299"/>
    <lineage>
        <taxon>Bacteria</taxon>
        <taxon>Pseudomonadati</taxon>
        <taxon>Pseudomonadota</taxon>
        <taxon>Alphaproteobacteria</taxon>
        <taxon>Hyphomicrobiales</taxon>
        <taxon>Rhizobiaceae</taxon>
        <taxon>Rhizobium/Agrobacterium group</taxon>
        <taxon>Agrobacterium</taxon>
        <taxon>Agrobacterium tumefaciens complex</taxon>
    </lineage>
</organism>
<name>RL34_AGRFC</name>
<gene>
    <name type="primary">rpmH</name>
    <name type="ordered locus">Atu0385.1</name>
    <name type="ORF">AGR_C_676</name>
</gene>
<comment type="similarity">
    <text evidence="1">Belongs to the bacterial ribosomal protein bL34 family.</text>
</comment>
<sequence>MSKRTFQPSKLVRKRRHGFRARMATAGGRKVLAARRARGRARLSA</sequence>
<keyword id="KW-1185">Reference proteome</keyword>
<keyword id="KW-0687">Ribonucleoprotein</keyword>
<keyword id="KW-0689">Ribosomal protein</keyword>
<feature type="chain" id="PRO_0000187332" description="Large ribosomal subunit protein bL34">
    <location>
        <begin position="1"/>
        <end position="45"/>
    </location>
</feature>
<reference key="1">
    <citation type="journal article" date="2001" name="Science">
        <title>The genome of the natural genetic engineer Agrobacterium tumefaciens C58.</title>
        <authorList>
            <person name="Wood D.W."/>
            <person name="Setubal J.C."/>
            <person name="Kaul R."/>
            <person name="Monks D.E."/>
            <person name="Kitajima J.P."/>
            <person name="Okura V.K."/>
            <person name="Zhou Y."/>
            <person name="Chen L."/>
            <person name="Wood G.E."/>
            <person name="Almeida N.F. Jr."/>
            <person name="Woo L."/>
            <person name="Chen Y."/>
            <person name="Paulsen I.T."/>
            <person name="Eisen J.A."/>
            <person name="Karp P.D."/>
            <person name="Bovee D. Sr."/>
            <person name="Chapman P."/>
            <person name="Clendenning J."/>
            <person name="Deatherage G."/>
            <person name="Gillet W."/>
            <person name="Grant C."/>
            <person name="Kutyavin T."/>
            <person name="Levy R."/>
            <person name="Li M.-J."/>
            <person name="McClelland E."/>
            <person name="Palmieri A."/>
            <person name="Raymond C."/>
            <person name="Rouse G."/>
            <person name="Saenphimmachak C."/>
            <person name="Wu Z."/>
            <person name="Romero P."/>
            <person name="Gordon D."/>
            <person name="Zhang S."/>
            <person name="Yoo H."/>
            <person name="Tao Y."/>
            <person name="Biddle P."/>
            <person name="Jung M."/>
            <person name="Krespan W."/>
            <person name="Perry M."/>
            <person name="Gordon-Kamm B."/>
            <person name="Liao L."/>
            <person name="Kim S."/>
            <person name="Hendrick C."/>
            <person name="Zhao Z.-Y."/>
            <person name="Dolan M."/>
            <person name="Chumley F."/>
            <person name="Tingey S.V."/>
            <person name="Tomb J.-F."/>
            <person name="Gordon M.P."/>
            <person name="Olson M.V."/>
            <person name="Nester E.W."/>
        </authorList>
    </citation>
    <scope>NUCLEOTIDE SEQUENCE [LARGE SCALE GENOMIC DNA]</scope>
    <source>
        <strain>C58 / ATCC 33970</strain>
    </source>
</reference>
<reference key="2">
    <citation type="journal article" date="2001" name="Science">
        <title>Genome sequence of the plant pathogen and biotechnology agent Agrobacterium tumefaciens C58.</title>
        <authorList>
            <person name="Goodner B."/>
            <person name="Hinkle G."/>
            <person name="Gattung S."/>
            <person name="Miller N."/>
            <person name="Blanchard M."/>
            <person name="Qurollo B."/>
            <person name="Goldman B.S."/>
            <person name="Cao Y."/>
            <person name="Askenazi M."/>
            <person name="Halling C."/>
            <person name="Mullin L."/>
            <person name="Houmiel K."/>
            <person name="Gordon J."/>
            <person name="Vaudin M."/>
            <person name="Iartchouk O."/>
            <person name="Epp A."/>
            <person name="Liu F."/>
            <person name="Wollam C."/>
            <person name="Allinger M."/>
            <person name="Doughty D."/>
            <person name="Scott C."/>
            <person name="Lappas C."/>
            <person name="Markelz B."/>
            <person name="Flanagan C."/>
            <person name="Crowell C."/>
            <person name="Gurson J."/>
            <person name="Lomo C."/>
            <person name="Sear C."/>
            <person name="Strub G."/>
            <person name="Cielo C."/>
            <person name="Slater S."/>
        </authorList>
    </citation>
    <scope>NUCLEOTIDE SEQUENCE [LARGE SCALE GENOMIC DNA]</scope>
    <source>
        <strain>C58 / ATCC 33970</strain>
    </source>
</reference>
<reference key="3">
    <citation type="journal article" date="2005" name="Bioinformatics">
        <title>Improving genome annotations using phylogenetic profile anomaly detection.</title>
        <authorList>
            <person name="Mikkelsen T.S."/>
            <person name="Galagan J.E."/>
            <person name="Mesirov J.P."/>
        </authorList>
    </citation>
    <scope>IDENTIFICATION</scope>
</reference>
<accession>P68996</accession>
<accession>A8WFE4</accession>